<organism>
    <name type="scientific">Helicobacter hepaticus (strain ATCC 51449 / 3B1)</name>
    <dbReference type="NCBI Taxonomy" id="235279"/>
    <lineage>
        <taxon>Bacteria</taxon>
        <taxon>Pseudomonadati</taxon>
        <taxon>Campylobacterota</taxon>
        <taxon>Epsilonproteobacteria</taxon>
        <taxon>Campylobacterales</taxon>
        <taxon>Helicobacteraceae</taxon>
        <taxon>Helicobacter</taxon>
    </lineage>
</organism>
<sequence length="64" mass="7237">MPKMKTNRGAAKRFKLKKNAIKRGSAFKNHILTKKSHQRKANLNAPKYVHSTNVDSVKSLLCMA</sequence>
<gene>
    <name evidence="1" type="primary">rpmI</name>
    <name type="ordered locus">HH_0444</name>
</gene>
<accession>Q7VJ07</accession>
<evidence type="ECO:0000255" key="1">
    <source>
        <dbReference type="HAMAP-Rule" id="MF_00514"/>
    </source>
</evidence>
<evidence type="ECO:0000305" key="2"/>
<proteinExistence type="inferred from homology"/>
<feature type="chain" id="PRO_0000177367" description="Large ribosomal subunit protein bL35">
    <location>
        <begin position="1"/>
        <end position="64"/>
    </location>
</feature>
<dbReference type="EMBL" id="AE017125">
    <property type="protein sequence ID" value="AAP77041.1"/>
    <property type="status" value="ALT_INIT"/>
    <property type="molecule type" value="Genomic_DNA"/>
</dbReference>
<dbReference type="RefSeq" id="WP_011115286.1">
    <property type="nucleotide sequence ID" value="NC_004917.1"/>
</dbReference>
<dbReference type="SMR" id="Q7VJ07"/>
<dbReference type="STRING" id="235279.HH_0444"/>
<dbReference type="KEGG" id="hhe:HH_0444"/>
<dbReference type="eggNOG" id="COG0291">
    <property type="taxonomic scope" value="Bacteria"/>
</dbReference>
<dbReference type="HOGENOM" id="CLU_169643_1_0_7"/>
<dbReference type="OrthoDB" id="9804851at2"/>
<dbReference type="Proteomes" id="UP000002495">
    <property type="component" value="Chromosome"/>
</dbReference>
<dbReference type="GO" id="GO:0022625">
    <property type="term" value="C:cytosolic large ribosomal subunit"/>
    <property type="evidence" value="ECO:0007669"/>
    <property type="project" value="TreeGrafter"/>
</dbReference>
<dbReference type="GO" id="GO:0003735">
    <property type="term" value="F:structural constituent of ribosome"/>
    <property type="evidence" value="ECO:0007669"/>
    <property type="project" value="InterPro"/>
</dbReference>
<dbReference type="GO" id="GO:0006412">
    <property type="term" value="P:translation"/>
    <property type="evidence" value="ECO:0007669"/>
    <property type="project" value="UniProtKB-UniRule"/>
</dbReference>
<dbReference type="FunFam" id="4.10.410.60:FF:000001">
    <property type="entry name" value="50S ribosomal protein L35"/>
    <property type="match status" value="1"/>
</dbReference>
<dbReference type="Gene3D" id="4.10.410.60">
    <property type="match status" value="1"/>
</dbReference>
<dbReference type="HAMAP" id="MF_00514">
    <property type="entry name" value="Ribosomal_bL35"/>
    <property type="match status" value="1"/>
</dbReference>
<dbReference type="InterPro" id="IPR001706">
    <property type="entry name" value="Ribosomal_bL35"/>
</dbReference>
<dbReference type="InterPro" id="IPR021137">
    <property type="entry name" value="Ribosomal_bL35-like"/>
</dbReference>
<dbReference type="InterPro" id="IPR018265">
    <property type="entry name" value="Ribosomal_bL35_CS"/>
</dbReference>
<dbReference type="InterPro" id="IPR037229">
    <property type="entry name" value="Ribosomal_bL35_sf"/>
</dbReference>
<dbReference type="NCBIfam" id="TIGR00001">
    <property type="entry name" value="rpmI_bact"/>
    <property type="match status" value="1"/>
</dbReference>
<dbReference type="PANTHER" id="PTHR33343">
    <property type="entry name" value="54S RIBOSOMAL PROTEIN BL35M"/>
    <property type="match status" value="1"/>
</dbReference>
<dbReference type="PANTHER" id="PTHR33343:SF1">
    <property type="entry name" value="LARGE RIBOSOMAL SUBUNIT PROTEIN BL35M"/>
    <property type="match status" value="1"/>
</dbReference>
<dbReference type="Pfam" id="PF01632">
    <property type="entry name" value="Ribosomal_L35p"/>
    <property type="match status" value="1"/>
</dbReference>
<dbReference type="PRINTS" id="PR00064">
    <property type="entry name" value="RIBOSOMALL35"/>
</dbReference>
<dbReference type="SUPFAM" id="SSF143034">
    <property type="entry name" value="L35p-like"/>
    <property type="match status" value="1"/>
</dbReference>
<dbReference type="PROSITE" id="PS00936">
    <property type="entry name" value="RIBOSOMAL_L35"/>
    <property type="match status" value="1"/>
</dbReference>
<protein>
    <recommendedName>
        <fullName evidence="1">Large ribosomal subunit protein bL35</fullName>
    </recommendedName>
    <alternativeName>
        <fullName evidence="2">50S ribosomal protein L35</fullName>
    </alternativeName>
</protein>
<comment type="similarity">
    <text evidence="1">Belongs to the bacterial ribosomal protein bL35 family.</text>
</comment>
<comment type="sequence caution" evidence="2">
    <conflict type="erroneous initiation">
        <sequence resource="EMBL-CDS" id="AAP77041"/>
    </conflict>
</comment>
<keyword id="KW-1185">Reference proteome</keyword>
<keyword id="KW-0687">Ribonucleoprotein</keyword>
<keyword id="KW-0689">Ribosomal protein</keyword>
<reference key="1">
    <citation type="journal article" date="2003" name="Proc. Natl. Acad. Sci. U.S.A.">
        <title>The complete genome sequence of the carcinogenic bacterium Helicobacter hepaticus.</title>
        <authorList>
            <person name="Suerbaum S."/>
            <person name="Josenhans C."/>
            <person name="Sterzenbach T."/>
            <person name="Drescher B."/>
            <person name="Brandt P."/>
            <person name="Bell M."/>
            <person name="Droege M."/>
            <person name="Fartmann B."/>
            <person name="Fischer H.-P."/>
            <person name="Ge Z."/>
            <person name="Hoerster A."/>
            <person name="Holland R."/>
            <person name="Klein K."/>
            <person name="Koenig J."/>
            <person name="Macko L."/>
            <person name="Mendz G.L."/>
            <person name="Nyakatura G."/>
            <person name="Schauer D.B."/>
            <person name="Shen Z."/>
            <person name="Weber J."/>
            <person name="Frosch M."/>
            <person name="Fox J.G."/>
        </authorList>
    </citation>
    <scope>NUCLEOTIDE SEQUENCE [LARGE SCALE GENOMIC DNA]</scope>
    <source>
        <strain>ATCC 51449 / 3B1</strain>
    </source>
</reference>
<name>RL35_HELHP</name>